<organism>
    <name type="scientific">Mycolicibacterium vanbaalenii (strain DSM 7251 / JCM 13017 / BCRC 16820 / KCTC 9966 / NRRL B-24157 / PYR-1)</name>
    <name type="common">Mycobacterium vanbaalenii</name>
    <dbReference type="NCBI Taxonomy" id="350058"/>
    <lineage>
        <taxon>Bacteria</taxon>
        <taxon>Bacillati</taxon>
        <taxon>Actinomycetota</taxon>
        <taxon>Actinomycetes</taxon>
        <taxon>Mycobacteriales</taxon>
        <taxon>Mycobacteriaceae</taxon>
        <taxon>Mycolicibacterium</taxon>
    </lineage>
</organism>
<gene>
    <name type="ordered locus">Mvan_1345</name>
</gene>
<feature type="chain" id="PRO_0000361259" description="Putative S-adenosyl-L-methionine-dependent methyltransferase Mvan_1345">
    <location>
        <begin position="1"/>
        <end position="306"/>
    </location>
</feature>
<feature type="binding site" evidence="1">
    <location>
        <position position="134"/>
    </location>
    <ligand>
        <name>S-adenosyl-L-methionine</name>
        <dbReference type="ChEBI" id="CHEBI:59789"/>
    </ligand>
</feature>
<feature type="binding site" evidence="1">
    <location>
        <begin position="163"/>
        <end position="164"/>
    </location>
    <ligand>
        <name>S-adenosyl-L-methionine</name>
        <dbReference type="ChEBI" id="CHEBI:59789"/>
    </ligand>
</feature>
<accession>A1T4S9</accession>
<dbReference type="EC" id="2.1.1.-"/>
<dbReference type="EMBL" id="CP000511">
    <property type="protein sequence ID" value="ABM12179.1"/>
    <property type="molecule type" value="Genomic_DNA"/>
</dbReference>
<dbReference type="RefSeq" id="WP_011778608.1">
    <property type="nucleotide sequence ID" value="NC_008726.1"/>
</dbReference>
<dbReference type="SMR" id="A1T4S9"/>
<dbReference type="STRING" id="350058.Mvan_1345"/>
<dbReference type="KEGG" id="mva:Mvan_1345"/>
<dbReference type="eggNOG" id="COG3315">
    <property type="taxonomic scope" value="Bacteria"/>
</dbReference>
<dbReference type="HOGENOM" id="CLU_056160_2_1_11"/>
<dbReference type="Proteomes" id="UP000009159">
    <property type="component" value="Chromosome"/>
</dbReference>
<dbReference type="GO" id="GO:0008168">
    <property type="term" value="F:methyltransferase activity"/>
    <property type="evidence" value="ECO:0007669"/>
    <property type="project" value="UniProtKB-KW"/>
</dbReference>
<dbReference type="GO" id="GO:0032259">
    <property type="term" value="P:methylation"/>
    <property type="evidence" value="ECO:0007669"/>
    <property type="project" value="UniProtKB-KW"/>
</dbReference>
<dbReference type="Gene3D" id="3.40.50.150">
    <property type="entry name" value="Vaccinia Virus protein VP39"/>
    <property type="match status" value="1"/>
</dbReference>
<dbReference type="InterPro" id="IPR007213">
    <property type="entry name" value="Ppm1/Ppm2/Tcmp"/>
</dbReference>
<dbReference type="InterPro" id="IPR029063">
    <property type="entry name" value="SAM-dependent_MTases_sf"/>
</dbReference>
<dbReference type="InterPro" id="IPR011610">
    <property type="entry name" value="SAM_mthyl_Trfase_ML2640-like"/>
</dbReference>
<dbReference type="NCBIfam" id="TIGR00027">
    <property type="entry name" value="mthyl_TIGR00027"/>
    <property type="match status" value="1"/>
</dbReference>
<dbReference type="PANTHER" id="PTHR43619">
    <property type="entry name" value="S-ADENOSYL-L-METHIONINE-DEPENDENT METHYLTRANSFERASE YKTD-RELATED"/>
    <property type="match status" value="1"/>
</dbReference>
<dbReference type="PANTHER" id="PTHR43619:SF2">
    <property type="entry name" value="S-ADENOSYL-L-METHIONINE-DEPENDENT METHYLTRANSFERASES SUPERFAMILY PROTEIN"/>
    <property type="match status" value="1"/>
</dbReference>
<dbReference type="Pfam" id="PF04072">
    <property type="entry name" value="LCM"/>
    <property type="match status" value="1"/>
</dbReference>
<dbReference type="SUPFAM" id="SSF53335">
    <property type="entry name" value="S-adenosyl-L-methionine-dependent methyltransferases"/>
    <property type="match status" value="1"/>
</dbReference>
<keyword id="KW-0489">Methyltransferase</keyword>
<keyword id="KW-0949">S-adenosyl-L-methionine</keyword>
<keyword id="KW-0808">Transferase</keyword>
<sequence length="306" mass="33054">MARTEGDTWDLGSSVGATATSVAANRAFASRSTAGGPEPLLNDPYADLLVEAVGLPHFIRVARGEIDFDDDPLFGARQMLEQITVRTRHFDDFFAGAMAAGPPKIRQAVILASGLDTRAYRLPWPAGTVVYEIDQPTVIEFKTAVLADAGVAPTAERRTVGIDLREDWPAALRGAGFDPTRPTAWIAEGLLIYLPPDAQDRLLDHITALSAPGSRLATEHMDAKALTGEWARAMTERARRHGSDVNLSELFYSGPRTSATEHLRAQGWQTEVLSSNDAYQAQGFAPVADHLVAMIGDSGYLTARLD</sequence>
<name>Y1345_MYCVP</name>
<comment type="function">
    <text evidence="1">Exhibits S-adenosyl-L-methionine-dependent methyltransferase activity.</text>
</comment>
<comment type="similarity">
    <text evidence="2">Belongs to the UPF0677 family.</text>
</comment>
<evidence type="ECO:0000250" key="1"/>
<evidence type="ECO:0000305" key="2"/>
<protein>
    <recommendedName>
        <fullName>Putative S-adenosyl-L-methionine-dependent methyltransferase Mvan_1345</fullName>
        <ecNumber>2.1.1.-</ecNumber>
    </recommendedName>
</protein>
<proteinExistence type="inferred from homology"/>
<reference key="1">
    <citation type="submission" date="2006-12" db="EMBL/GenBank/DDBJ databases">
        <title>Complete sequence of Mycobacterium vanbaalenii PYR-1.</title>
        <authorList>
            <consortium name="US DOE Joint Genome Institute"/>
            <person name="Copeland A."/>
            <person name="Lucas S."/>
            <person name="Lapidus A."/>
            <person name="Barry K."/>
            <person name="Detter J.C."/>
            <person name="Glavina del Rio T."/>
            <person name="Hammon N."/>
            <person name="Israni S."/>
            <person name="Dalin E."/>
            <person name="Tice H."/>
            <person name="Pitluck S."/>
            <person name="Singan V."/>
            <person name="Schmutz J."/>
            <person name="Larimer F."/>
            <person name="Land M."/>
            <person name="Hauser L."/>
            <person name="Kyrpides N."/>
            <person name="Anderson I.J."/>
            <person name="Miller C."/>
            <person name="Richardson P."/>
        </authorList>
    </citation>
    <scope>NUCLEOTIDE SEQUENCE [LARGE SCALE GENOMIC DNA]</scope>
    <source>
        <strain>DSM 7251 / JCM 13017 / BCRC 16820 / KCTC 9966 / NRRL B-24157 / PYR-1</strain>
    </source>
</reference>